<keyword id="KW-1003">Cell membrane</keyword>
<keyword id="KW-0472">Membrane</keyword>
<keyword id="KW-0536">Nodulation</keyword>
<keyword id="KW-0597">Phosphoprotein</keyword>
<keyword id="KW-1185">Reference proteome</keyword>
<keyword id="KW-0677">Repeat</keyword>
<keyword id="KW-0808">Transferase</keyword>
<keyword id="KW-0833">Ubl conjugation pathway</keyword>
<comment type="function">
    <text evidence="3 4">Exhibits U-box-dependent E3 ubiquitin ligase activity in vitro (PubMed:20971894, PubMed:26839127). Negatively modulates successive stages of infection and development of rhizobial (e.g. Sinorhizobium meliloti) and arbuscular mycorrhizal fungi (AM, e.g. Rhizophagus irregularis) symbioses, in an ubiquitin ligase activity-dependent manner (PubMed:26839127). Negative regulator of the LYK3 signaling pathway leading to nitrogen-fixing symbiosis (e.g. infection and nodulation) by rhizobia. May be involved in the discrimination of rhizobium strains producing variant Nod factors (PubMed:20971894).</text>
</comment>
<comment type="catalytic activity">
    <reaction evidence="3">
        <text>S-ubiquitinyl-[E2 ubiquitin-conjugating enzyme]-L-cysteine + [acceptor protein]-L-lysine = [E2 ubiquitin-conjugating enzyme]-L-cysteine + N(6)-ubiquitinyl-[acceptor protein]-L-lysine.</text>
        <dbReference type="EC" id="2.3.2.27"/>
    </reaction>
</comment>
<comment type="pathway">
    <text evidence="3">Protein modification; protein ubiquitination.</text>
</comment>
<comment type="subunit">
    <text evidence="3 4">Interacts with LYK3 (PubMed:20971894). Binds to NORK/DMI2 (PubMed:26839127).</text>
</comment>
<comment type="subcellular location">
    <subcellularLocation>
        <location evidence="3">Cell membrane</location>
    </subcellularLocation>
</comment>
<comment type="tissue specificity">
    <text evidence="3 4">Present ubiquitously at very low levels during nonsymbiotic growth. Accumulates in roots and nodules during symbiotic growth with rhizobia and mycorrhiza.</text>
</comment>
<comment type="developmental stage">
    <text evidence="3 4">Expressed specifically in symbiotic conditions with S.meliloti, especially in cortical cells in close contact with rhizobial infections. Accumulates in nodule primordia. In young nodules, confined to the apical regions. In mature nodules, present in a broad apical region encompassing the pre-infection, infection, and early nitrogen fixation zones (PubMed:20971894). Expressed at all stages of arbuscular mycorrhizal (AM) fungal infection in epidermal and cortical infected cells, and in cells in their close vicinity. Two weeks after inoculation with R.irregularis, confined to localized areas associated with the presence of the fungus. Later expressed in epidermal cells directly associated with visible hyphopodia forming on the root surface, and in a few restricted outer cortical cells in the immediate vicinity. In fully colonized roots, observed in infected outer cortical cells and in surrounding cells. Also detected both inside and in the vicinity of inner cortical cells containing arbuscules (PubMed:26839127).</text>
</comment>
<comment type="induction">
    <text evidence="3 4">Induced by S.meliloti Nod factors. Strongly induced in roots during nodulation and to a lesser extent following mycorrhization (PubMed:20971894). Activated during successive stages of root colonization by R.irregularis (PubMed:26839127).</text>
</comment>
<comment type="PTM">
    <text evidence="3 4">Phosphorylated by LYK3 in vitro (PubMed:20971894). Phosphorylated by NORK/DMI2 (PubMed:26839127).</text>
</comment>
<comment type="disruption phenotype">
    <text evidence="3">Increased nodulation in plants infected by S.meliloti expressing modified inefficient Nod factors (e.g. nodF nodL) or in the mutant lyk3-4 infected by wild-type S.meliloti.</text>
</comment>
<proteinExistence type="evidence at protein level"/>
<feature type="chain" id="PRO_0000436504" description="U-box domain-containing protein 1">
    <location>
        <begin position="1"/>
        <end position="694"/>
    </location>
</feature>
<feature type="domain" description="U-box" evidence="2">
    <location>
        <begin position="292"/>
        <end position="366"/>
    </location>
</feature>
<feature type="repeat" description="ARM 1" evidence="1">
    <location>
        <begin position="392"/>
        <end position="432"/>
    </location>
</feature>
<feature type="repeat" description="ARM 2" evidence="1">
    <location>
        <begin position="435"/>
        <end position="474"/>
    </location>
</feature>
<feature type="repeat" description="ARM 3" evidence="1">
    <location>
        <begin position="476"/>
        <end position="516"/>
    </location>
</feature>
<feature type="repeat" description="ARM 4" evidence="1">
    <location>
        <begin position="519"/>
        <end position="558"/>
    </location>
</feature>
<feature type="repeat" description="ARM 5" evidence="1">
    <location>
        <begin position="560"/>
        <end position="599"/>
    </location>
</feature>
<feature type="repeat" description="ARM 6" evidence="1">
    <location>
        <begin position="601"/>
        <end position="641"/>
    </location>
</feature>
<feature type="repeat" description="ARM 7" evidence="1">
    <location>
        <begin position="646"/>
        <end position="685"/>
    </location>
</feature>
<feature type="mutagenesis site" description="In pub1-1; abolished E3 ubiquitin ligase activity and slight reduction of the total root length. Increased and faster fungal colonization by R.irregularis." evidence="4">
    <original>D</original>
    <variation>N</variation>
    <location>
        <position position="308"/>
    </location>
</feature>
<feature type="mutagenesis site" description="Abolished E3 ubiquitin ligase activity." evidence="3">
    <original>W</original>
    <variation>A</variation>
    <location>
        <position position="326"/>
    </location>
</feature>
<name>PUB1_MEDTR</name>
<sequence length="694" mass="76929">MNDPRSKMMISPGLLPTESLLDSLILISNEVSSMQKFPLVQIKNVSSMIRRIKLLSSLFEEIQESDSPLPPSSILCFIEIFSVITRVKVLIQECTDGSSLWSLIQLDFISNQFFVLVKEMGRALDILPLNLLNVAQDIKEQVDLLHKQSKRVELELFIDPREVQRRENLFEVMSKNCLQNKKTNNNKGFIDFVKVEEIMCSIGLRTLSDYVEEISKLEVEAQNQAGTGGLIVVSNINNLMSLVSYTKSMVFRNDGESEECKPISMFLYNKSKIHDNDSSSSSSFSQSMMTVNIPDEFRCPISLDLMRDPVIVSSGHTYDRISIAEWINSGHHTCPKSGQRLIHTALIPNYALKSLVHQWCYENNVKMNEAITKNNNSSSKRHKNENAIDHISENKASKDAVKMTAEFLVGKLATGSTDIQRQSAYEIRLLAKTGMDNRRIIAEVGAIPFLVTLLVSKDSRIQEHVVTALFNLSIYDNNKILIMAAGAIDNIVEVLEFGKTMEARENAAAAIYSLSMIDDCKVQIGASSRAIPALVGLLKEGTIIGKRDAATALFNLAVYNPNKLSIVKSGAVTLLVELLMDDKAGITDDSLAVLAVLLGCSEGLEEIKNSKSLVPLLIDLLRFGSVKGKENSITLLLGLCKEEGELVAMRLLANPRSIPSLQSLAADGSLRARRKADALLRLLNRCCSQPHHSL</sequence>
<organism evidence="8">
    <name type="scientific">Medicago truncatula</name>
    <name type="common">Barrel medic</name>
    <name type="synonym">Medicago tribuloides</name>
    <dbReference type="NCBI Taxonomy" id="3880"/>
    <lineage>
        <taxon>Eukaryota</taxon>
        <taxon>Viridiplantae</taxon>
        <taxon>Streptophyta</taxon>
        <taxon>Embryophyta</taxon>
        <taxon>Tracheophyta</taxon>
        <taxon>Spermatophyta</taxon>
        <taxon>Magnoliopsida</taxon>
        <taxon>eudicotyledons</taxon>
        <taxon>Gunneridae</taxon>
        <taxon>Pentapetalae</taxon>
        <taxon>rosids</taxon>
        <taxon>fabids</taxon>
        <taxon>Fabales</taxon>
        <taxon>Fabaceae</taxon>
        <taxon>Papilionoideae</taxon>
        <taxon>50 kb inversion clade</taxon>
        <taxon>NPAAA clade</taxon>
        <taxon>Hologalegina</taxon>
        <taxon>IRL clade</taxon>
        <taxon>Trifolieae</taxon>
        <taxon>Medicago</taxon>
    </lineage>
</organism>
<gene>
    <name evidence="5" type="primary">PUB1</name>
    <name evidence="7" type="ordered locus">MTR_5g083030</name>
</gene>
<evidence type="ECO:0000255" key="1"/>
<evidence type="ECO:0000255" key="2">
    <source>
        <dbReference type="PROSITE-ProRule" id="PRU01034"/>
    </source>
</evidence>
<evidence type="ECO:0000269" key="3">
    <source>
    </source>
</evidence>
<evidence type="ECO:0000269" key="4">
    <source>
    </source>
</evidence>
<evidence type="ECO:0000303" key="5">
    <source>
    </source>
</evidence>
<evidence type="ECO:0000305" key="6"/>
<evidence type="ECO:0000312" key="7">
    <source>
        <dbReference type="EMBL" id="AES99632.2"/>
    </source>
</evidence>
<evidence type="ECO:0000312" key="8">
    <source>
        <dbReference type="EMBL" id="DAA33939.1"/>
    </source>
</evidence>
<accession>E4NKF8</accession>
<accession>A0A0C3XRJ4</accession>
<accession>G7K272</accession>
<dbReference type="EC" id="2.3.2.27" evidence="3"/>
<dbReference type="EMBL" id="BK007068">
    <property type="protein sequence ID" value="DAA33939.1"/>
    <property type="molecule type" value="mRNA"/>
</dbReference>
<dbReference type="EMBL" id="CM001221">
    <property type="protein sequence ID" value="AES99632.2"/>
    <property type="molecule type" value="Genomic_DNA"/>
</dbReference>
<dbReference type="RefSeq" id="XP_003616674.2">
    <property type="nucleotide sequence ID" value="XM_003616626.2"/>
</dbReference>
<dbReference type="SMR" id="E4NKF8"/>
<dbReference type="STRING" id="3880.E4NKF8"/>
<dbReference type="PaxDb" id="3880-AES99632"/>
<dbReference type="EnsemblPlants" id="rna32667">
    <property type="protein sequence ID" value="RHN57163.1"/>
    <property type="gene ID" value="gene32667"/>
</dbReference>
<dbReference type="GeneID" id="11430446"/>
<dbReference type="Gramene" id="rna32667">
    <property type="protein sequence ID" value="RHN57163.1"/>
    <property type="gene ID" value="gene32667"/>
</dbReference>
<dbReference type="KEGG" id="mtr:11430446"/>
<dbReference type="eggNOG" id="KOG0167">
    <property type="taxonomic scope" value="Eukaryota"/>
</dbReference>
<dbReference type="HOGENOM" id="CLU_006348_5_1_1"/>
<dbReference type="OrthoDB" id="10064100at2759"/>
<dbReference type="UniPathway" id="UPA00143"/>
<dbReference type="Proteomes" id="UP000002051">
    <property type="component" value="Chromosome 5"/>
</dbReference>
<dbReference type="GO" id="GO:0005737">
    <property type="term" value="C:cytoplasm"/>
    <property type="evidence" value="ECO:0000318"/>
    <property type="project" value="GO_Central"/>
</dbReference>
<dbReference type="GO" id="GO:0005634">
    <property type="term" value="C:nucleus"/>
    <property type="evidence" value="ECO:0000318"/>
    <property type="project" value="GO_Central"/>
</dbReference>
<dbReference type="GO" id="GO:0005886">
    <property type="term" value="C:plasma membrane"/>
    <property type="evidence" value="ECO:0000314"/>
    <property type="project" value="UniProtKB"/>
</dbReference>
<dbReference type="GO" id="GO:0061630">
    <property type="term" value="F:ubiquitin protein ligase activity"/>
    <property type="evidence" value="ECO:0000314"/>
    <property type="project" value="UniProtKB"/>
</dbReference>
<dbReference type="GO" id="GO:0036377">
    <property type="term" value="P:arbuscular mycorrhizal association"/>
    <property type="evidence" value="ECO:0000315"/>
    <property type="project" value="UniProtKB"/>
</dbReference>
<dbReference type="GO" id="GO:0009877">
    <property type="term" value="P:nodulation"/>
    <property type="evidence" value="ECO:0000315"/>
    <property type="project" value="UniProtKB"/>
</dbReference>
<dbReference type="GO" id="GO:0016567">
    <property type="term" value="P:protein ubiquitination"/>
    <property type="evidence" value="ECO:0007669"/>
    <property type="project" value="UniProtKB-UniPathway"/>
</dbReference>
<dbReference type="GO" id="GO:0002237">
    <property type="term" value="P:response to molecule of bacterial origin"/>
    <property type="evidence" value="ECO:0000270"/>
    <property type="project" value="UniProtKB"/>
</dbReference>
<dbReference type="GO" id="GO:0009609">
    <property type="term" value="P:response to symbiotic bacterium"/>
    <property type="evidence" value="ECO:0000270"/>
    <property type="project" value="UniProtKB"/>
</dbReference>
<dbReference type="GO" id="GO:0009610">
    <property type="term" value="P:response to symbiotic fungus"/>
    <property type="evidence" value="ECO:0000314"/>
    <property type="project" value="UniProtKB"/>
</dbReference>
<dbReference type="CDD" id="cd16664">
    <property type="entry name" value="RING-Ubox_PUB"/>
    <property type="match status" value="1"/>
</dbReference>
<dbReference type="FunFam" id="1.25.10.10:FF:001110">
    <property type="entry name" value="RING-type E3 ubiquitin transferase"/>
    <property type="match status" value="1"/>
</dbReference>
<dbReference type="FunFam" id="3.30.40.10:FF:000114">
    <property type="entry name" value="RING-type E3 ubiquitin transferase"/>
    <property type="match status" value="1"/>
</dbReference>
<dbReference type="Gene3D" id="1.25.10.10">
    <property type="entry name" value="Leucine-rich Repeat Variant"/>
    <property type="match status" value="2"/>
</dbReference>
<dbReference type="Gene3D" id="3.30.40.10">
    <property type="entry name" value="Zinc/RING finger domain, C3HC4 (zinc finger)"/>
    <property type="match status" value="1"/>
</dbReference>
<dbReference type="InterPro" id="IPR011989">
    <property type="entry name" value="ARM-like"/>
</dbReference>
<dbReference type="InterPro" id="IPR016024">
    <property type="entry name" value="ARM-type_fold"/>
</dbReference>
<dbReference type="InterPro" id="IPR000225">
    <property type="entry name" value="Armadillo"/>
</dbReference>
<dbReference type="InterPro" id="IPR045210">
    <property type="entry name" value="RING-Ubox_PUB"/>
</dbReference>
<dbReference type="InterPro" id="IPR003613">
    <property type="entry name" value="Ubox_domain"/>
</dbReference>
<dbReference type="InterPro" id="IPR013083">
    <property type="entry name" value="Znf_RING/FYVE/PHD"/>
</dbReference>
<dbReference type="PANTHER" id="PTHR23315">
    <property type="entry name" value="U BOX DOMAIN-CONTAINING"/>
    <property type="match status" value="1"/>
</dbReference>
<dbReference type="PANTHER" id="PTHR23315:SF224">
    <property type="entry name" value="U-BOX DOMAIN-CONTAINING PROTEIN 1"/>
    <property type="match status" value="1"/>
</dbReference>
<dbReference type="Pfam" id="PF00514">
    <property type="entry name" value="Arm"/>
    <property type="match status" value="1"/>
</dbReference>
<dbReference type="Pfam" id="PF25368">
    <property type="entry name" value="PUB10_N"/>
    <property type="match status" value="1"/>
</dbReference>
<dbReference type="Pfam" id="PF04564">
    <property type="entry name" value="U-box"/>
    <property type="match status" value="1"/>
</dbReference>
<dbReference type="SMART" id="SM00185">
    <property type="entry name" value="ARM"/>
    <property type="match status" value="5"/>
</dbReference>
<dbReference type="SMART" id="SM00504">
    <property type="entry name" value="Ubox"/>
    <property type="match status" value="1"/>
</dbReference>
<dbReference type="SUPFAM" id="SSF48371">
    <property type="entry name" value="ARM repeat"/>
    <property type="match status" value="1"/>
</dbReference>
<dbReference type="SUPFAM" id="SSF57850">
    <property type="entry name" value="RING/U-box"/>
    <property type="match status" value="1"/>
</dbReference>
<dbReference type="PROSITE" id="PS50176">
    <property type="entry name" value="ARM_REPEAT"/>
    <property type="match status" value="2"/>
</dbReference>
<dbReference type="PROSITE" id="PS51698">
    <property type="entry name" value="U_BOX"/>
    <property type="match status" value="1"/>
</dbReference>
<protein>
    <recommendedName>
        <fullName evidence="5">U-box domain-containing protein 1</fullName>
        <ecNumber evidence="3">2.3.2.27</ecNumber>
    </recommendedName>
    <alternativeName>
        <fullName evidence="5">Plant U-box protein 1</fullName>
        <shortName evidence="5">MtPUB1</shortName>
    </alternativeName>
    <alternativeName>
        <fullName evidence="6">RING-type E3 ubiquitin transferase PUB1</fullName>
    </alternativeName>
</protein>
<reference key="1">
    <citation type="journal article" date="2010" name="Plant Cell">
        <title>The Medicago truncatula E3 ubiquitin ligase PUB1 interacts with the LYK3 symbiotic receptor and negatively regulates infection and nodulation.</title>
        <authorList>
            <person name="Mbengue M."/>
            <person name="Camut S."/>
            <person name="de Carvalho-Niebel F."/>
            <person name="Deslandes L."/>
            <person name="Froidure S."/>
            <person name="Klaus-Heisen D."/>
            <person name="Moreau S."/>
            <person name="Rivas S."/>
            <person name="Timmers T."/>
            <person name="Herve C."/>
            <person name="Cullimore J."/>
            <person name="Lefebvre B."/>
        </authorList>
    </citation>
    <scope>NUCLEOTIDE SEQUENCE [MRNA]</scope>
    <scope>FUNCTION</scope>
    <scope>DISRUPTION PHENOTYPE</scope>
    <scope>MUTAGENESIS OF TRP-326</scope>
    <scope>PATHWAY</scope>
    <scope>INTERACTION WITH LYK3</scope>
    <scope>SUBCELLULAR LOCATION</scope>
    <scope>TISSUE SPECIFICITY</scope>
    <scope>DEVELOPMENTAL STAGE</scope>
    <scope>INDUCTION BY NOD FACTORS</scope>
    <scope>PHOSPHORYLATION BY LYK3</scope>
    <source>
        <strain>cv. Jemalong A17</strain>
    </source>
</reference>
<reference key="2">
    <citation type="journal article" date="2011" name="Nature">
        <title>The Medicago genome provides insight into the evolution of rhizobial symbioses.</title>
        <authorList>
            <person name="Young N.D."/>
            <person name="Debelle F."/>
            <person name="Oldroyd G.E.D."/>
            <person name="Geurts R."/>
            <person name="Cannon S.B."/>
            <person name="Udvardi M.K."/>
            <person name="Benedito V.A."/>
            <person name="Mayer K.F.X."/>
            <person name="Gouzy J."/>
            <person name="Schoof H."/>
            <person name="Van de Peer Y."/>
            <person name="Proost S."/>
            <person name="Cook D.R."/>
            <person name="Meyers B.C."/>
            <person name="Spannagl M."/>
            <person name="Cheung F."/>
            <person name="De Mita S."/>
            <person name="Krishnakumar V."/>
            <person name="Gundlach H."/>
            <person name="Zhou S."/>
            <person name="Mudge J."/>
            <person name="Bharti A.K."/>
            <person name="Murray J.D."/>
            <person name="Naoumkina M.A."/>
            <person name="Rosen B."/>
            <person name="Silverstein K.A.T."/>
            <person name="Tang H."/>
            <person name="Rombauts S."/>
            <person name="Zhao P.X."/>
            <person name="Zhou P."/>
            <person name="Barbe V."/>
            <person name="Bardou P."/>
            <person name="Bechner M."/>
            <person name="Bellec A."/>
            <person name="Berger A."/>
            <person name="Berges H."/>
            <person name="Bidwell S."/>
            <person name="Bisseling T."/>
            <person name="Choisne N."/>
            <person name="Couloux A."/>
            <person name="Denny R."/>
            <person name="Deshpande S."/>
            <person name="Dai X."/>
            <person name="Doyle J.J."/>
            <person name="Dudez A.-M."/>
            <person name="Farmer A.D."/>
            <person name="Fouteau S."/>
            <person name="Franken C."/>
            <person name="Gibelin C."/>
            <person name="Gish J."/>
            <person name="Goldstein S."/>
            <person name="Gonzalez A.J."/>
            <person name="Green P.J."/>
            <person name="Hallab A."/>
            <person name="Hartog M."/>
            <person name="Hua A."/>
            <person name="Humphray S.J."/>
            <person name="Jeong D.-H."/>
            <person name="Jing Y."/>
            <person name="Jocker A."/>
            <person name="Kenton S.M."/>
            <person name="Kim D.-J."/>
            <person name="Klee K."/>
            <person name="Lai H."/>
            <person name="Lang C."/>
            <person name="Lin S."/>
            <person name="Macmil S.L."/>
            <person name="Magdelenat G."/>
            <person name="Matthews L."/>
            <person name="McCorrison J."/>
            <person name="Monaghan E.L."/>
            <person name="Mun J.-H."/>
            <person name="Najar F.Z."/>
            <person name="Nicholson C."/>
            <person name="Noirot C."/>
            <person name="O'Bleness M."/>
            <person name="Paule C.R."/>
            <person name="Poulain J."/>
            <person name="Prion F."/>
            <person name="Qin B."/>
            <person name="Qu C."/>
            <person name="Retzel E.F."/>
            <person name="Riddle C."/>
            <person name="Sallet E."/>
            <person name="Samain S."/>
            <person name="Samson N."/>
            <person name="Sanders I."/>
            <person name="Saurat O."/>
            <person name="Scarpelli C."/>
            <person name="Schiex T."/>
            <person name="Segurens B."/>
            <person name="Severin A.J."/>
            <person name="Sherrier D.J."/>
            <person name="Shi R."/>
            <person name="Sims S."/>
            <person name="Singer S.R."/>
            <person name="Sinharoy S."/>
            <person name="Sterck L."/>
            <person name="Viollet A."/>
            <person name="Wang B.-B."/>
            <person name="Wang K."/>
            <person name="Wang M."/>
            <person name="Wang X."/>
            <person name="Warfsmann J."/>
            <person name="Weissenbach J."/>
            <person name="White D.D."/>
            <person name="White J.D."/>
            <person name="Wiley G.B."/>
            <person name="Wincker P."/>
            <person name="Xing Y."/>
            <person name="Yang L."/>
            <person name="Yao Z."/>
            <person name="Ying F."/>
            <person name="Zhai J."/>
            <person name="Zhou L."/>
            <person name="Zuber A."/>
            <person name="Denarie J."/>
            <person name="Dixon R.A."/>
            <person name="May G.D."/>
            <person name="Schwartz D.C."/>
            <person name="Rogers J."/>
            <person name="Quetier F."/>
            <person name="Town C.D."/>
            <person name="Roe B.A."/>
        </authorList>
    </citation>
    <scope>NUCLEOTIDE SEQUENCE [LARGE SCALE GENOMIC DNA]</scope>
    <source>
        <strain>cv. Jemalong A17</strain>
    </source>
</reference>
<reference key="3">
    <citation type="journal article" date="2014" name="BMC Genomics">
        <title>An improved genome release (version Mt4.0) for the model legume Medicago truncatula.</title>
        <authorList>
            <person name="Tang H."/>
            <person name="Krishnakumar V."/>
            <person name="Bidwell S."/>
            <person name="Rosen B."/>
            <person name="Chan A."/>
            <person name="Zhou S."/>
            <person name="Gentzbittel L."/>
            <person name="Childs K.L."/>
            <person name="Yandell M."/>
            <person name="Gundlach H."/>
            <person name="Mayer K.F."/>
            <person name="Schwartz D.C."/>
            <person name="Town C.D."/>
        </authorList>
    </citation>
    <scope>GENOME REANNOTATION</scope>
    <source>
        <strain>cv. Jemalong A17</strain>
    </source>
</reference>
<reference key="4">
    <citation type="journal article" date="2016" name="Plant Physiol.">
        <title>PUB1 interacts with the receptor kinase DMI2 and negatively regulates rhizobial and arbuscular mycorrhizal symbioses through its ubiquitination activity in Medicago truncatula.</title>
        <authorList>
            <person name="Vernie T."/>
            <person name="Camut S."/>
            <person name="Camps C."/>
            <person name="Rembliere C."/>
            <person name="de Carvalho-Niebel F."/>
            <person name="Mbengue M."/>
            <person name="Timmers T."/>
            <person name="Gasciolli V."/>
            <person name="Thompson R.D."/>
            <person name="Lesignor C."/>
            <person name="Lefebvre B."/>
            <person name="Cullimore J.V."/>
            <person name="Herve C."/>
        </authorList>
    </citation>
    <scope>FUNCTION</scope>
    <scope>MUTAGENESIS OF ASP-308</scope>
    <scope>INTERACTION WITH NORK/DMI2</scope>
    <scope>PHOSPHORYLATION AT NORK/DMI2</scope>
    <scope>INDUCTION BY RHIZOPHAGUS IRREGULARIS</scope>
    <scope>TISSUE SPECIFICITY</scope>
    <scope>DEVELOPMENTAL STAGE</scope>
</reference>